<feature type="chain" id="PRO_1000213641" description="Redox-sensing transcriptional repressor Rex">
    <location>
        <begin position="1"/>
        <end position="213"/>
    </location>
</feature>
<feature type="DNA-binding region" description="H-T-H motif" evidence="1">
    <location>
        <begin position="16"/>
        <end position="55"/>
    </location>
</feature>
<feature type="binding site" evidence="1">
    <location>
        <begin position="90"/>
        <end position="95"/>
    </location>
    <ligand>
        <name>NAD(+)</name>
        <dbReference type="ChEBI" id="CHEBI:57540"/>
    </ligand>
</feature>
<accession>A5D3M8</accession>
<comment type="function">
    <text evidence="1">Modulates transcription in response to changes in cellular NADH/NAD(+) redox state.</text>
</comment>
<comment type="subunit">
    <text evidence="1">Homodimer.</text>
</comment>
<comment type="subcellular location">
    <subcellularLocation>
        <location evidence="1">Cytoplasm</location>
    </subcellularLocation>
</comment>
<comment type="similarity">
    <text evidence="1">Belongs to the transcriptional regulatory Rex family.</text>
</comment>
<name>REX_PELTS</name>
<organism>
    <name type="scientific">Pelotomaculum thermopropionicum (strain DSM 13744 / JCM 10971 / SI)</name>
    <dbReference type="NCBI Taxonomy" id="370438"/>
    <lineage>
        <taxon>Bacteria</taxon>
        <taxon>Bacillati</taxon>
        <taxon>Bacillota</taxon>
        <taxon>Clostridia</taxon>
        <taxon>Eubacteriales</taxon>
        <taxon>Desulfotomaculaceae</taxon>
        <taxon>Pelotomaculum</taxon>
    </lineage>
</organism>
<evidence type="ECO:0000255" key="1">
    <source>
        <dbReference type="HAMAP-Rule" id="MF_01131"/>
    </source>
</evidence>
<gene>
    <name evidence="1" type="primary">rex</name>
    <name type="ordered locus">PTH_0985</name>
</gene>
<keyword id="KW-0963">Cytoplasm</keyword>
<keyword id="KW-0238">DNA-binding</keyword>
<keyword id="KW-0520">NAD</keyword>
<keyword id="KW-1185">Reference proteome</keyword>
<keyword id="KW-0678">Repressor</keyword>
<keyword id="KW-0804">Transcription</keyword>
<keyword id="KW-0805">Transcription regulation</keyword>
<reference key="1">
    <citation type="journal article" date="2008" name="Genome Res.">
        <title>The genome of Pelotomaculum thermopropionicum reveals niche-associated evolution in anaerobic microbiota.</title>
        <authorList>
            <person name="Kosaka T."/>
            <person name="Kato S."/>
            <person name="Shimoyama T."/>
            <person name="Ishii S."/>
            <person name="Abe T."/>
            <person name="Watanabe K."/>
        </authorList>
    </citation>
    <scope>NUCLEOTIDE SEQUENCE [LARGE SCALE GENOMIC DNA]</scope>
    <source>
        <strain>DSM 13744 / JCM 10971 / SI</strain>
    </source>
</reference>
<sequence>MKALKVPEATITRLSVYSRFLERMDRNGIVTVSSGEIAEGVGVSSAQVRKDLAYFGEFGTRGVGYNVKDLMHYTSKILGLNEPWPIVLAGAGNLGFALCTYKGFNDRGFTIVGVFDNDLTKIGKKIVDLEVYPPERMPEVIAKHKVRIGIIAVPARAAQEVADQMVKNGLQAILNFAPVVLNVPDHVLLRNVDLSVSLEVLTFNLVQKESQAG</sequence>
<protein>
    <recommendedName>
        <fullName evidence="1">Redox-sensing transcriptional repressor Rex</fullName>
    </recommendedName>
</protein>
<proteinExistence type="inferred from homology"/>
<dbReference type="EMBL" id="AP009389">
    <property type="protein sequence ID" value="BAF59166.1"/>
    <property type="molecule type" value="Genomic_DNA"/>
</dbReference>
<dbReference type="SMR" id="A5D3M8"/>
<dbReference type="STRING" id="370438.PTH_0985"/>
<dbReference type="KEGG" id="pth:PTH_0985"/>
<dbReference type="eggNOG" id="COG2344">
    <property type="taxonomic scope" value="Bacteria"/>
</dbReference>
<dbReference type="HOGENOM" id="CLU_061534_1_0_9"/>
<dbReference type="Proteomes" id="UP000006556">
    <property type="component" value="Chromosome"/>
</dbReference>
<dbReference type="GO" id="GO:0005737">
    <property type="term" value="C:cytoplasm"/>
    <property type="evidence" value="ECO:0007669"/>
    <property type="project" value="UniProtKB-SubCell"/>
</dbReference>
<dbReference type="GO" id="GO:0003677">
    <property type="term" value="F:DNA binding"/>
    <property type="evidence" value="ECO:0007669"/>
    <property type="project" value="UniProtKB-UniRule"/>
</dbReference>
<dbReference type="GO" id="GO:0003700">
    <property type="term" value="F:DNA-binding transcription factor activity"/>
    <property type="evidence" value="ECO:0007669"/>
    <property type="project" value="UniProtKB-UniRule"/>
</dbReference>
<dbReference type="GO" id="GO:0045892">
    <property type="term" value="P:negative regulation of DNA-templated transcription"/>
    <property type="evidence" value="ECO:0007669"/>
    <property type="project" value="InterPro"/>
</dbReference>
<dbReference type="GO" id="GO:0051775">
    <property type="term" value="P:response to redox state"/>
    <property type="evidence" value="ECO:0007669"/>
    <property type="project" value="InterPro"/>
</dbReference>
<dbReference type="Gene3D" id="3.40.50.720">
    <property type="entry name" value="NAD(P)-binding Rossmann-like Domain"/>
    <property type="match status" value="1"/>
</dbReference>
<dbReference type="Gene3D" id="1.10.10.10">
    <property type="entry name" value="Winged helix-like DNA-binding domain superfamily/Winged helix DNA-binding domain"/>
    <property type="match status" value="1"/>
</dbReference>
<dbReference type="HAMAP" id="MF_01131">
    <property type="entry name" value="Rex"/>
    <property type="match status" value="1"/>
</dbReference>
<dbReference type="InterPro" id="IPR003781">
    <property type="entry name" value="CoA-bd"/>
</dbReference>
<dbReference type="InterPro" id="IPR036291">
    <property type="entry name" value="NAD(P)-bd_dom_sf"/>
</dbReference>
<dbReference type="InterPro" id="IPR009718">
    <property type="entry name" value="Rex_DNA-bd_C_dom"/>
</dbReference>
<dbReference type="InterPro" id="IPR022876">
    <property type="entry name" value="Tscrpt_rep_Rex"/>
</dbReference>
<dbReference type="InterPro" id="IPR036388">
    <property type="entry name" value="WH-like_DNA-bd_sf"/>
</dbReference>
<dbReference type="InterPro" id="IPR036390">
    <property type="entry name" value="WH_DNA-bd_sf"/>
</dbReference>
<dbReference type="NCBIfam" id="NF003989">
    <property type="entry name" value="PRK05472.1-3"/>
    <property type="match status" value="1"/>
</dbReference>
<dbReference type="NCBIfam" id="NF003992">
    <property type="entry name" value="PRK05472.2-1"/>
    <property type="match status" value="1"/>
</dbReference>
<dbReference type="NCBIfam" id="NF003993">
    <property type="entry name" value="PRK05472.2-2"/>
    <property type="match status" value="1"/>
</dbReference>
<dbReference type="NCBIfam" id="NF003994">
    <property type="entry name" value="PRK05472.2-3"/>
    <property type="match status" value="1"/>
</dbReference>
<dbReference type="NCBIfam" id="NF003995">
    <property type="entry name" value="PRK05472.2-4"/>
    <property type="match status" value="1"/>
</dbReference>
<dbReference type="NCBIfam" id="NF003996">
    <property type="entry name" value="PRK05472.2-5"/>
    <property type="match status" value="1"/>
</dbReference>
<dbReference type="PANTHER" id="PTHR35786">
    <property type="entry name" value="REDOX-SENSING TRANSCRIPTIONAL REPRESSOR REX"/>
    <property type="match status" value="1"/>
</dbReference>
<dbReference type="PANTHER" id="PTHR35786:SF1">
    <property type="entry name" value="REDOX-SENSING TRANSCRIPTIONAL REPRESSOR REX 1"/>
    <property type="match status" value="1"/>
</dbReference>
<dbReference type="Pfam" id="PF02629">
    <property type="entry name" value="CoA_binding"/>
    <property type="match status" value="1"/>
</dbReference>
<dbReference type="Pfam" id="PF06971">
    <property type="entry name" value="Put_DNA-bind_N"/>
    <property type="match status" value="1"/>
</dbReference>
<dbReference type="SMART" id="SM00881">
    <property type="entry name" value="CoA_binding"/>
    <property type="match status" value="1"/>
</dbReference>
<dbReference type="SUPFAM" id="SSF51735">
    <property type="entry name" value="NAD(P)-binding Rossmann-fold domains"/>
    <property type="match status" value="1"/>
</dbReference>
<dbReference type="SUPFAM" id="SSF46785">
    <property type="entry name" value="Winged helix' DNA-binding domain"/>
    <property type="match status" value="1"/>
</dbReference>